<accession>P51466</accession>
<feature type="chain" id="PRO_0000205211" description="Arrestin red cell isoform 1">
    <location>
        <begin position="1"/>
        <end position="407"/>
    </location>
</feature>
<keyword id="KW-0963">Cytoplasm</keyword>
<keyword id="KW-0716">Sensory transduction</keyword>
<evidence type="ECO:0000305" key="1"/>
<comment type="subcellular location">
    <subcellularLocation>
        <location evidence="1">Cytoplasm</location>
    </subcellularLocation>
</comment>
<comment type="similarity">
    <text evidence="1">Belongs to the arrestin family.</text>
</comment>
<reference key="1">
    <citation type="journal article" date="1996" name="Biochem. J.">
        <title>Trout red blood cell arrestin (TRCarr), a novel member of the arrestin family: cloning, immunoprecipitation and expression of recombinant TRCarr.</title>
        <authorList>
            <person name="Jahns R."/>
            <person name="Borgese F."/>
            <person name="Lindenthal S."/>
            <person name="Straub A."/>
            <person name="Motais R."/>
            <person name="Fievet B."/>
        </authorList>
    </citation>
    <scope>NUCLEOTIDE SEQUENCE [MRNA]</scope>
</reference>
<dbReference type="EMBL" id="U48410">
    <property type="protein sequence ID" value="AAB16954.1"/>
    <property type="molecule type" value="mRNA"/>
</dbReference>
<dbReference type="PIR" id="S68253">
    <property type="entry name" value="S68253"/>
</dbReference>
<dbReference type="RefSeq" id="XP_021478111.1">
    <property type="nucleotide sequence ID" value="XM_021622436.2"/>
</dbReference>
<dbReference type="SMR" id="P51466"/>
<dbReference type="Ensembl" id="ENSOMYT00000073338.2">
    <property type="protein sequence ID" value="ENSOMYP00000067330.1"/>
    <property type="gene ID" value="ENSOMYG00000031213.2"/>
</dbReference>
<dbReference type="GeneID" id="100335038"/>
<dbReference type="GeneTree" id="ENSGT00950000182887"/>
<dbReference type="Proteomes" id="UP000694395">
    <property type="component" value="Chromosome 12"/>
</dbReference>
<dbReference type="GO" id="GO:0005737">
    <property type="term" value="C:cytoplasm"/>
    <property type="evidence" value="ECO:0007669"/>
    <property type="project" value="UniProtKB-SubCell"/>
</dbReference>
<dbReference type="GO" id="GO:0031701">
    <property type="term" value="F:angiotensin receptor binding"/>
    <property type="evidence" value="ECO:0007669"/>
    <property type="project" value="TreeGrafter"/>
</dbReference>
<dbReference type="GO" id="GO:0002031">
    <property type="term" value="P:G protein-coupled receptor internalization"/>
    <property type="evidence" value="ECO:0007669"/>
    <property type="project" value="TreeGrafter"/>
</dbReference>
<dbReference type="GO" id="GO:0007399">
    <property type="term" value="P:nervous system development"/>
    <property type="evidence" value="ECO:0007669"/>
    <property type="project" value="UniProtKB-ARBA"/>
</dbReference>
<dbReference type="GO" id="GO:0070374">
    <property type="term" value="P:positive regulation of ERK1 and ERK2 cascade"/>
    <property type="evidence" value="ECO:0007669"/>
    <property type="project" value="TreeGrafter"/>
</dbReference>
<dbReference type="GO" id="GO:0007165">
    <property type="term" value="P:signal transduction"/>
    <property type="evidence" value="ECO:0007669"/>
    <property type="project" value="InterPro"/>
</dbReference>
<dbReference type="FunFam" id="2.60.40.640:FF:000003">
    <property type="entry name" value="beta-arrestin-1 isoform X1"/>
    <property type="match status" value="1"/>
</dbReference>
<dbReference type="FunFam" id="2.60.40.840:FF:000001">
    <property type="entry name" value="beta-arrestin-1 isoform X1"/>
    <property type="match status" value="1"/>
</dbReference>
<dbReference type="Gene3D" id="2.60.40.640">
    <property type="match status" value="1"/>
</dbReference>
<dbReference type="Gene3D" id="2.60.40.840">
    <property type="match status" value="1"/>
</dbReference>
<dbReference type="InterPro" id="IPR000698">
    <property type="entry name" value="Arrestin"/>
</dbReference>
<dbReference type="InterPro" id="IPR014752">
    <property type="entry name" value="Arrestin-like_C"/>
</dbReference>
<dbReference type="InterPro" id="IPR011021">
    <property type="entry name" value="Arrestin-like_N"/>
</dbReference>
<dbReference type="InterPro" id="IPR011022">
    <property type="entry name" value="Arrestin_C-like"/>
</dbReference>
<dbReference type="InterPro" id="IPR017864">
    <property type="entry name" value="Arrestin_CS"/>
</dbReference>
<dbReference type="InterPro" id="IPR014753">
    <property type="entry name" value="Arrestin_N"/>
</dbReference>
<dbReference type="InterPro" id="IPR014756">
    <property type="entry name" value="Ig_E-set"/>
</dbReference>
<dbReference type="PANTHER" id="PTHR11792">
    <property type="entry name" value="ARRESTIN"/>
    <property type="match status" value="1"/>
</dbReference>
<dbReference type="PANTHER" id="PTHR11792:SF20">
    <property type="entry name" value="BETA-ARRESTIN-2"/>
    <property type="match status" value="1"/>
</dbReference>
<dbReference type="Pfam" id="PF02752">
    <property type="entry name" value="Arrestin_C"/>
    <property type="match status" value="1"/>
</dbReference>
<dbReference type="Pfam" id="PF00339">
    <property type="entry name" value="Arrestin_N"/>
    <property type="match status" value="1"/>
</dbReference>
<dbReference type="PRINTS" id="PR00309">
    <property type="entry name" value="ARRESTIN"/>
</dbReference>
<dbReference type="SMART" id="SM01017">
    <property type="entry name" value="Arrestin_C"/>
    <property type="match status" value="1"/>
</dbReference>
<dbReference type="SUPFAM" id="SSF81296">
    <property type="entry name" value="E set domains"/>
    <property type="match status" value="2"/>
</dbReference>
<dbReference type="PROSITE" id="PS00295">
    <property type="entry name" value="ARRESTINS"/>
    <property type="match status" value="1"/>
</dbReference>
<organism>
    <name type="scientific">Oncorhynchus mykiss</name>
    <name type="common">Rainbow trout</name>
    <name type="synonym">Salmo gairdneri</name>
    <dbReference type="NCBI Taxonomy" id="8022"/>
    <lineage>
        <taxon>Eukaryota</taxon>
        <taxon>Metazoa</taxon>
        <taxon>Chordata</taxon>
        <taxon>Craniata</taxon>
        <taxon>Vertebrata</taxon>
        <taxon>Euteleostomi</taxon>
        <taxon>Actinopterygii</taxon>
        <taxon>Neopterygii</taxon>
        <taxon>Teleostei</taxon>
        <taxon>Protacanthopterygii</taxon>
        <taxon>Salmoniformes</taxon>
        <taxon>Salmonidae</taxon>
        <taxon>Salmoninae</taxon>
        <taxon>Oncorhynchus</taxon>
    </lineage>
</organism>
<name>ARR1_ONCMY</name>
<protein>
    <recommendedName>
        <fullName>Arrestin red cell isoform 1</fullName>
    </recommendedName>
    <alternativeName>
        <fullName>TrCarr 1</fullName>
    </alternativeName>
</protein>
<proteinExistence type="evidence at transcript level"/>
<sequence>MGDKAGTRVFKKSSPNCKVTVYLGKRDFVDHLDQVDPVDGVILVDPEYLKDRKVFVTLTCAFRYGREDLDVLGLSFRKDLYISTFQAFPPIAEERKANSRLQERLLKKLGQQAHPFYFTIPQNLPCSVTLQPGPEDTGKACGVDFEIRAFCAKSIEEKIHKRNSVRLVIRKVQYAPEKPGPQPMVETTRSFLMSDRSLHLEASLDKELYYHGEPISVNVHVTNNSTKTVKRLKISVRQYADICLFSTAQYKCPVAQVEADDQVSSSSTFCKVYTLTPTLDKNREKRGLALDGKLKHEDTNLASSTIVKDVTNKEVLGILVSYRVKVKLVISRGGDVSVELPFVLMHPKPTELPISRPQSAVPDSDPPIDTNLIEFETNSFSQDDDFVFEDFARLRLKGMADDKDDDC</sequence>